<organism>
    <name type="scientific">Conus striatus</name>
    <name type="common">Striated cone</name>
    <dbReference type="NCBI Taxonomy" id="6493"/>
    <lineage>
        <taxon>Eukaryota</taxon>
        <taxon>Metazoa</taxon>
        <taxon>Spiralia</taxon>
        <taxon>Lophotrochozoa</taxon>
        <taxon>Mollusca</taxon>
        <taxon>Gastropoda</taxon>
        <taxon>Caenogastropoda</taxon>
        <taxon>Neogastropoda</taxon>
        <taxon>Conoidea</taxon>
        <taxon>Conidae</taxon>
        <taxon>Conus</taxon>
        <taxon>Pionoconus</taxon>
    </lineage>
</organism>
<comment type="function">
    <text evidence="1">Delta-conotoxins bind to site 6 of voltage-gated sodium channels (Nav) and inhibit the inactivation process.</text>
</comment>
<comment type="subcellular location">
    <subcellularLocation>
        <location evidence="1">Secreted</location>
    </subcellularLocation>
</comment>
<comment type="tissue specificity">
    <text>Expressed by the venom duct.</text>
</comment>
<comment type="domain">
    <text evidence="1">The presence of a 'disulfide through disulfide knot' structurally defines this protein as a knottin.</text>
</comment>
<comment type="domain">
    <text>The cysteine framework is VI/VII (C-C-CC-C-C).</text>
</comment>
<comment type="similarity">
    <text evidence="3">Belongs to the conotoxin O1 superfamily.</text>
</comment>
<keyword id="KW-1015">Disulfide bond</keyword>
<keyword id="KW-0872">Ion channel impairing toxin</keyword>
<keyword id="KW-0960">Knottin</keyword>
<keyword id="KW-0528">Neurotoxin</keyword>
<keyword id="KW-0638">Presynaptic neurotoxin</keyword>
<keyword id="KW-0964">Secreted</keyword>
<keyword id="KW-0732">Signal</keyword>
<keyword id="KW-0800">Toxin</keyword>
<keyword id="KW-0738">Voltage-gated sodium channel impairing toxin</keyword>
<name>O168_CONST</name>
<reference key="1">
    <citation type="journal article" date="2006" name="Biochimie">
        <title>Analysis of expressed sequence tags from the venom ducts of Conus striatus: focusing on the expression profile of conotoxins.</title>
        <authorList>
            <person name="Pi C."/>
            <person name="Liu Y."/>
            <person name="Peng C."/>
            <person name="Jiang X."/>
            <person name="Liu J."/>
            <person name="Xu B."/>
            <person name="Yu X."/>
            <person name="Yu Y."/>
            <person name="Jiang X."/>
            <person name="Wang L."/>
            <person name="Dong M."/>
            <person name="Chen S."/>
            <person name="Xu A.-L."/>
        </authorList>
    </citation>
    <scope>NUCLEOTIDE SEQUENCE [MRNA]</scope>
    <source>
        <tissue>Venom duct</tissue>
    </source>
</reference>
<evidence type="ECO:0000250" key="1"/>
<evidence type="ECO:0000255" key="2"/>
<evidence type="ECO:0000305" key="3"/>
<proteinExistence type="evidence at transcript level"/>
<dbReference type="EMBL" id="DQ512803">
    <property type="protein sequence ID" value="ABF69254.1"/>
    <property type="molecule type" value="mRNA"/>
</dbReference>
<dbReference type="ConoServer" id="2757">
    <property type="toxin name" value="S6.8 precursor"/>
</dbReference>
<dbReference type="GO" id="GO:0005576">
    <property type="term" value="C:extracellular region"/>
    <property type="evidence" value="ECO:0007669"/>
    <property type="project" value="UniProtKB-SubCell"/>
</dbReference>
<dbReference type="GO" id="GO:0044231">
    <property type="term" value="C:host cell presynaptic membrane"/>
    <property type="evidence" value="ECO:0007669"/>
    <property type="project" value="UniProtKB-KW"/>
</dbReference>
<dbReference type="GO" id="GO:0019871">
    <property type="term" value="F:sodium channel inhibitor activity"/>
    <property type="evidence" value="ECO:0007669"/>
    <property type="project" value="InterPro"/>
</dbReference>
<dbReference type="GO" id="GO:0090729">
    <property type="term" value="F:toxin activity"/>
    <property type="evidence" value="ECO:0007669"/>
    <property type="project" value="UniProtKB-KW"/>
</dbReference>
<dbReference type="InterPro" id="IPR004214">
    <property type="entry name" value="Conotoxin"/>
</dbReference>
<dbReference type="InterPro" id="IPR012322">
    <property type="entry name" value="Conotoxin_d-typ_CS"/>
</dbReference>
<dbReference type="Pfam" id="PF02950">
    <property type="entry name" value="Conotoxin"/>
    <property type="match status" value="1"/>
</dbReference>
<dbReference type="PROSITE" id="PS60005">
    <property type="entry name" value="DELTA_CONOTOXIN"/>
    <property type="match status" value="1"/>
</dbReference>
<accession>B2KJ30</accession>
<sequence length="78" mass="8582">MKLTCMMIVAVLFLTAWTFVTADDSRNGLKNLFPKARHEMKNPDASKLNKRDGCSNAGGFCGIHPGLCCSEICLVWCT</sequence>
<feature type="signal peptide" evidence="2">
    <location>
        <begin position="1"/>
        <end position="22"/>
    </location>
</feature>
<feature type="propeptide" id="PRO_0000345100" evidence="1">
    <location>
        <begin position="23"/>
        <end position="53"/>
    </location>
</feature>
<feature type="peptide" id="PRO_0000345101" description="Delta-conotoxin-like S6.8">
    <location>
        <begin position="54"/>
        <end position="78"/>
    </location>
</feature>
<feature type="disulfide bond" evidence="1">
    <location>
        <begin position="54"/>
        <end position="69"/>
    </location>
</feature>
<feature type="disulfide bond" evidence="1">
    <location>
        <begin position="61"/>
        <end position="73"/>
    </location>
</feature>
<feature type="disulfide bond" evidence="1">
    <location>
        <begin position="68"/>
        <end position="77"/>
    </location>
</feature>
<protein>
    <recommendedName>
        <fullName>Delta-conotoxin-like S6.8</fullName>
    </recommendedName>
</protein>